<comment type="function">
    <text evidence="1">Required for the insertion and/or proper folding and/or complex formation of integral membrane proteins into the membrane. Involved in integration of membrane proteins that insert both dependently and independently of the Sec translocase complex, as well as at least some lipoproteins. Aids folding of multispanning membrane proteins.</text>
</comment>
<comment type="subunit">
    <text evidence="1">Interacts with the Sec translocase complex via SecD. Specifically interacts with transmembrane segments of nascent integral membrane proteins during membrane integration.</text>
</comment>
<comment type="subcellular location">
    <subcellularLocation>
        <location evidence="1">Cell membrane</location>
        <topology evidence="1">Multi-pass membrane protein</topology>
    </subcellularLocation>
</comment>
<comment type="similarity">
    <text evidence="1">Belongs to the OXA1/ALB3/YidC family. Type 1 subfamily.</text>
</comment>
<comment type="sequence caution" evidence="2">
    <conflict type="erroneous initiation">
        <sequence resource="EMBL-CDS" id="AAM67588"/>
    </conflict>
    <text>Extended N-terminus.</text>
</comment>
<protein>
    <recommendedName>
        <fullName evidence="1">Membrane protein insertase YidC</fullName>
    </recommendedName>
    <alternativeName>
        <fullName evidence="1">Foldase YidC</fullName>
    </alternativeName>
    <alternativeName>
        <fullName evidence="1">Membrane integrase YidC</fullName>
    </alternativeName>
    <alternativeName>
        <fullName evidence="1">Membrane protein YidC</fullName>
    </alternativeName>
</protein>
<sequence>MELQRNFFIFAFLFVSFLLWQAWQSQSLKKNKKNEETNSFFHLNHKKEDKNQIIIKNDVLRLVINMYGGDIEEASLLDYKTQLNSPENLKLLETKSDFVYQAQSGLIGKDGLDNSINKIRPLYSAKKNFFELGHNEKELRVPITFIAKNGITYIKNFILKPGKYNVEVEYDINNLSNKKLELNIFGQLKQTVKLPKNRDIYSGNFALQTFRGAAYSSSDAKYEKYKFDNIANHEHLHIITHHGWIAMLQQYFVVAWVPDTNISSSNIIYTSYLDNDGIAIIGYKSSLINIPSNSRYIIKSKLWIGPEKQQEMALVAPNLDLTVDYGFLWFLSQPLFKLLSTIHNFIGNWGFSIILITFMMKAITYPLTKAQYTSMSKMRELQPKINELKKNFGHDKQRMSKEIMALYKKEKINPLGGCLPVFIQMPIFLSLYYMLIGSVELRHAPFLFWIKDLSDQDPYYVLPIFMGLTMFFIQRTSSNNISDPFQQKIMHFMPFIFTVFFLWFPSGLVLYYIVSNLVTIIQQKYILSNFKKNQKR</sequence>
<reference key="1">
    <citation type="submission" date="1996-06" db="EMBL/GenBank/DDBJ databases">
        <title>The nucleotide sequence of 60K, tdhF, groES and groEL genes of Buchnera aphidicola.</title>
        <authorList>
            <person name="Anwarul H.K."/>
            <person name="Moriya S."/>
            <person name="Baumann P."/>
            <person name="Yoshikawa H."/>
            <person name="Ogasawara N."/>
        </authorList>
    </citation>
    <scope>NUCLEOTIDE SEQUENCE [GENOMIC DNA]</scope>
</reference>
<reference key="2">
    <citation type="journal article" date="1998" name="Curr. Microbiol.">
        <title>Sequence analysis of a 34.7-kb DNA segment from the genome of Buchnera aphidicola (endosymbiont of aphids) containing groEL, dnaA, the atp operon, gidA, and rho.</title>
        <authorList>
            <person name="Clark M.A."/>
            <person name="Baumann L."/>
            <person name="Baumann P."/>
        </authorList>
    </citation>
    <scope>NUCLEOTIDE SEQUENCE [GENOMIC DNA]</scope>
</reference>
<reference key="3">
    <citation type="journal article" date="2002" name="Science">
        <title>50 million years of genomic stasis in endosymbiotic bacteria.</title>
        <authorList>
            <person name="Tamas I."/>
            <person name="Klasson L."/>
            <person name="Canbaeck B."/>
            <person name="Naeslund A.K."/>
            <person name="Eriksson A.-S."/>
            <person name="Wernegreen J.J."/>
            <person name="Sandstroem J.P."/>
            <person name="Moran N.A."/>
            <person name="Andersson S.G.E."/>
        </authorList>
    </citation>
    <scope>NUCLEOTIDE SEQUENCE [LARGE SCALE GENOMIC DNA]</scope>
    <source>
        <strain>Sg</strain>
    </source>
</reference>
<reference key="4">
    <citation type="journal article" date="1992" name="Gene">
        <title>Genetic analysis of an aphid endosymbiont DNA fragment homologous to the rnpA-rpmH-dnaA-dnaN-gyrB region of eubacteria.</title>
        <authorList>
            <person name="Lai C.-Y."/>
            <person name="Baumann P."/>
        </authorList>
    </citation>
    <scope>NUCLEOTIDE SEQUENCE [GENOMIC DNA] OF 1-273</scope>
</reference>
<keyword id="KW-1003">Cell membrane</keyword>
<keyword id="KW-0143">Chaperone</keyword>
<keyword id="KW-0472">Membrane</keyword>
<keyword id="KW-0653">Protein transport</keyword>
<keyword id="KW-0812">Transmembrane</keyword>
<keyword id="KW-1133">Transmembrane helix</keyword>
<keyword id="KW-0813">Transport</keyword>
<accession>P29431</accession>
<feature type="chain" id="PRO_0000124697" description="Membrane protein insertase YidC">
    <location>
        <begin position="1"/>
        <end position="536"/>
    </location>
</feature>
<feature type="transmembrane region" description="Helical" evidence="1">
    <location>
        <begin position="7"/>
        <end position="27"/>
    </location>
</feature>
<feature type="transmembrane region" description="Helical" evidence="1">
    <location>
        <begin position="338"/>
        <end position="358"/>
    </location>
</feature>
<feature type="transmembrane region" description="Helical" evidence="1">
    <location>
        <begin position="419"/>
        <end position="439"/>
    </location>
</feature>
<feature type="transmembrane region" description="Helical" evidence="1">
    <location>
        <begin position="453"/>
        <end position="473"/>
    </location>
</feature>
<feature type="transmembrane region" description="Helical" evidence="1">
    <location>
        <begin position="494"/>
        <end position="514"/>
    </location>
</feature>
<feature type="sequence conflict" description="In Ref. 1; BAA12844 and 2; AAC38102." evidence="2" ref="1 2">
    <original>L</original>
    <variation>V</variation>
    <location>
        <position position="367"/>
    </location>
</feature>
<gene>
    <name evidence="1" type="primary">yidC</name>
    <name type="ordered locus">BUsg_016</name>
</gene>
<name>YIDC_BUCAP</name>
<proteinExistence type="inferred from homology"/>
<evidence type="ECO:0000255" key="1">
    <source>
        <dbReference type="HAMAP-Rule" id="MF_01810"/>
    </source>
</evidence>
<evidence type="ECO:0000305" key="2"/>
<dbReference type="EMBL" id="D85628">
    <property type="protein sequence ID" value="BAA12844.1"/>
    <property type="molecule type" value="Genomic_DNA"/>
</dbReference>
<dbReference type="EMBL" id="AF008210">
    <property type="protein sequence ID" value="AAC38102.1"/>
    <property type="molecule type" value="Genomic_DNA"/>
</dbReference>
<dbReference type="EMBL" id="AE013218">
    <property type="protein sequence ID" value="AAM67588.1"/>
    <property type="status" value="ALT_INIT"/>
    <property type="molecule type" value="Genomic_DNA"/>
</dbReference>
<dbReference type="EMBL" id="M80817">
    <property type="protein sequence ID" value="AAA73145.1"/>
    <property type="molecule type" value="Genomic_DNA"/>
</dbReference>
<dbReference type="PIR" id="JC1157">
    <property type="entry name" value="JC1157"/>
</dbReference>
<dbReference type="RefSeq" id="WP_044006072.1">
    <property type="nucleotide sequence ID" value="NC_004061.1"/>
</dbReference>
<dbReference type="SMR" id="P29431"/>
<dbReference type="STRING" id="198804.BUsg_016"/>
<dbReference type="GeneID" id="93003478"/>
<dbReference type="KEGG" id="bas:BUsg_016"/>
<dbReference type="eggNOG" id="COG0706">
    <property type="taxonomic scope" value="Bacteria"/>
</dbReference>
<dbReference type="HOGENOM" id="CLU_016535_3_0_6"/>
<dbReference type="Proteomes" id="UP000000416">
    <property type="component" value="Chromosome"/>
</dbReference>
<dbReference type="GO" id="GO:0005886">
    <property type="term" value="C:plasma membrane"/>
    <property type="evidence" value="ECO:0007669"/>
    <property type="project" value="UniProtKB-SubCell"/>
</dbReference>
<dbReference type="GO" id="GO:0032977">
    <property type="term" value="F:membrane insertase activity"/>
    <property type="evidence" value="ECO:0007669"/>
    <property type="project" value="InterPro"/>
</dbReference>
<dbReference type="GO" id="GO:0051205">
    <property type="term" value="P:protein insertion into membrane"/>
    <property type="evidence" value="ECO:0007669"/>
    <property type="project" value="TreeGrafter"/>
</dbReference>
<dbReference type="GO" id="GO:0015031">
    <property type="term" value="P:protein transport"/>
    <property type="evidence" value="ECO:0007669"/>
    <property type="project" value="UniProtKB-KW"/>
</dbReference>
<dbReference type="CDD" id="cd20070">
    <property type="entry name" value="5TM_YidC_Alb3"/>
    <property type="match status" value="1"/>
</dbReference>
<dbReference type="CDD" id="cd19961">
    <property type="entry name" value="EcYidC-like_peri"/>
    <property type="match status" value="1"/>
</dbReference>
<dbReference type="Gene3D" id="2.70.98.90">
    <property type="match status" value="1"/>
</dbReference>
<dbReference type="HAMAP" id="MF_01810">
    <property type="entry name" value="YidC_type1"/>
    <property type="match status" value="1"/>
</dbReference>
<dbReference type="InterPro" id="IPR019998">
    <property type="entry name" value="Membr_insert_YidC"/>
</dbReference>
<dbReference type="InterPro" id="IPR028053">
    <property type="entry name" value="Membr_insert_YidC_N"/>
</dbReference>
<dbReference type="InterPro" id="IPR001708">
    <property type="entry name" value="YidC/ALB3/OXA1/COX18"/>
</dbReference>
<dbReference type="InterPro" id="IPR028055">
    <property type="entry name" value="YidC/Oxa/ALB_C"/>
</dbReference>
<dbReference type="InterPro" id="IPR047196">
    <property type="entry name" value="YidC_ALB_C"/>
</dbReference>
<dbReference type="InterPro" id="IPR038221">
    <property type="entry name" value="YidC_periplasmic_sf"/>
</dbReference>
<dbReference type="NCBIfam" id="NF002351">
    <property type="entry name" value="PRK01318.1-1"/>
    <property type="match status" value="1"/>
</dbReference>
<dbReference type="NCBIfam" id="NF002352">
    <property type="entry name" value="PRK01318.1-3"/>
    <property type="match status" value="1"/>
</dbReference>
<dbReference type="NCBIfam" id="TIGR03593">
    <property type="entry name" value="yidC_nterm"/>
    <property type="match status" value="1"/>
</dbReference>
<dbReference type="NCBIfam" id="TIGR03592">
    <property type="entry name" value="yidC_oxa1_cterm"/>
    <property type="match status" value="1"/>
</dbReference>
<dbReference type="PANTHER" id="PTHR12428:SF65">
    <property type="entry name" value="CYTOCHROME C OXIDASE ASSEMBLY PROTEIN COX18, MITOCHONDRIAL"/>
    <property type="match status" value="1"/>
</dbReference>
<dbReference type="PANTHER" id="PTHR12428">
    <property type="entry name" value="OXA1"/>
    <property type="match status" value="1"/>
</dbReference>
<dbReference type="Pfam" id="PF02096">
    <property type="entry name" value="60KD_IMP"/>
    <property type="match status" value="1"/>
</dbReference>
<dbReference type="Pfam" id="PF14849">
    <property type="entry name" value="YidC_periplas"/>
    <property type="match status" value="1"/>
</dbReference>
<dbReference type="PRINTS" id="PR00701">
    <property type="entry name" value="60KDINNERMP"/>
</dbReference>
<dbReference type="PRINTS" id="PR01900">
    <property type="entry name" value="YIDCPROTEIN"/>
</dbReference>
<organism>
    <name type="scientific">Buchnera aphidicola subsp. Schizaphis graminum (strain Sg)</name>
    <dbReference type="NCBI Taxonomy" id="198804"/>
    <lineage>
        <taxon>Bacteria</taxon>
        <taxon>Pseudomonadati</taxon>
        <taxon>Pseudomonadota</taxon>
        <taxon>Gammaproteobacteria</taxon>
        <taxon>Enterobacterales</taxon>
        <taxon>Erwiniaceae</taxon>
        <taxon>Buchnera</taxon>
    </lineage>
</organism>